<reference key="1">
    <citation type="journal article" date="2005" name="PLoS Genet.">
        <title>Life in hot carbon monoxide: the complete genome sequence of Carboxydothermus hydrogenoformans Z-2901.</title>
        <authorList>
            <person name="Wu M."/>
            <person name="Ren Q."/>
            <person name="Durkin A.S."/>
            <person name="Daugherty S.C."/>
            <person name="Brinkac L.M."/>
            <person name="Dodson R.J."/>
            <person name="Madupu R."/>
            <person name="Sullivan S.A."/>
            <person name="Kolonay J.F."/>
            <person name="Nelson W.C."/>
            <person name="Tallon L.J."/>
            <person name="Jones K.M."/>
            <person name="Ulrich L.E."/>
            <person name="Gonzalez J.M."/>
            <person name="Zhulin I.B."/>
            <person name="Robb F.T."/>
            <person name="Eisen J.A."/>
        </authorList>
    </citation>
    <scope>NUCLEOTIDE SEQUENCE [LARGE SCALE GENOMIC DNA]</scope>
    <source>
        <strain>ATCC BAA-161 / DSM 6008 / Z-2901</strain>
    </source>
</reference>
<gene>
    <name evidence="1" type="primary">clpP</name>
    <name type="ordered locus">CHY_0325</name>
</gene>
<keyword id="KW-0963">Cytoplasm</keyword>
<keyword id="KW-0378">Hydrolase</keyword>
<keyword id="KW-0645">Protease</keyword>
<keyword id="KW-1185">Reference proteome</keyword>
<keyword id="KW-0720">Serine protease</keyword>
<comment type="function">
    <text evidence="1">Cleaves peptides in various proteins in a process that requires ATP hydrolysis. Has a chymotrypsin-like activity. Plays a major role in the degradation of misfolded proteins.</text>
</comment>
<comment type="catalytic activity">
    <reaction evidence="1">
        <text>Hydrolysis of proteins to small peptides in the presence of ATP and magnesium. alpha-casein is the usual test substrate. In the absence of ATP, only oligopeptides shorter than five residues are hydrolyzed (such as succinyl-Leu-Tyr-|-NHMec, and Leu-Tyr-Leu-|-Tyr-Trp, in which cleavage of the -Tyr-|-Leu- and -Tyr-|-Trp bonds also occurs).</text>
        <dbReference type="EC" id="3.4.21.92"/>
    </reaction>
</comment>
<comment type="subunit">
    <text evidence="1">Fourteen ClpP subunits assemble into 2 heptameric rings which stack back to back to give a disk-like structure with a central cavity, resembling the structure of eukaryotic proteasomes.</text>
</comment>
<comment type="subcellular location">
    <subcellularLocation>
        <location evidence="1">Cytoplasm</location>
    </subcellularLocation>
</comment>
<comment type="similarity">
    <text evidence="1">Belongs to the peptidase S14 family.</text>
</comment>
<feature type="chain" id="PRO_0000226434" description="ATP-dependent Clp protease proteolytic subunit">
    <location>
        <begin position="1"/>
        <end position="195"/>
    </location>
</feature>
<feature type="active site" description="Nucleophile" evidence="1">
    <location>
        <position position="99"/>
    </location>
</feature>
<feature type="active site" evidence="1">
    <location>
        <position position="124"/>
    </location>
</feature>
<protein>
    <recommendedName>
        <fullName evidence="1">ATP-dependent Clp protease proteolytic subunit</fullName>
        <ecNumber evidence="1">3.4.21.92</ecNumber>
    </recommendedName>
    <alternativeName>
        <fullName evidence="1">Endopeptidase Clp</fullName>
    </alternativeName>
</protein>
<sequence>MSYLVPIVIEQTSRGERSYDIWSRLLKDRTIFIGGPIDDHVANLVIAQMLFLEAEDPEKDIHLYINSPGGVITAGMAIYDTMQYIKPDVSTICIGQAASMGAFLLAAGAKGKRFSLPYARIMIHQPLGGVQGQATDIDIHAREILRMRDMLNELLTKHTGQPKEKIERDTERDFFMSAAEAKEYGIIDEVITVRK</sequence>
<proteinExistence type="inferred from homology"/>
<organism>
    <name type="scientific">Carboxydothermus hydrogenoformans (strain ATCC BAA-161 / DSM 6008 / Z-2901)</name>
    <dbReference type="NCBI Taxonomy" id="246194"/>
    <lineage>
        <taxon>Bacteria</taxon>
        <taxon>Bacillati</taxon>
        <taxon>Bacillota</taxon>
        <taxon>Clostridia</taxon>
        <taxon>Thermoanaerobacterales</taxon>
        <taxon>Thermoanaerobacteraceae</taxon>
        <taxon>Carboxydothermus</taxon>
    </lineage>
</organism>
<accession>Q3AF96</accession>
<name>CLPP_CARHZ</name>
<dbReference type="EC" id="3.4.21.92" evidence="1"/>
<dbReference type="EMBL" id="CP000141">
    <property type="protein sequence ID" value="ABB14088.1"/>
    <property type="molecule type" value="Genomic_DNA"/>
</dbReference>
<dbReference type="RefSeq" id="WP_011343264.1">
    <property type="nucleotide sequence ID" value="NC_007503.1"/>
</dbReference>
<dbReference type="SMR" id="Q3AF96"/>
<dbReference type="FunCoup" id="Q3AF96">
    <property type="interactions" value="392"/>
</dbReference>
<dbReference type="STRING" id="246194.CHY_0325"/>
<dbReference type="MEROPS" id="S14.001"/>
<dbReference type="KEGG" id="chy:CHY_0325"/>
<dbReference type="eggNOG" id="COG0740">
    <property type="taxonomic scope" value="Bacteria"/>
</dbReference>
<dbReference type="HOGENOM" id="CLU_058707_3_2_9"/>
<dbReference type="InParanoid" id="Q3AF96"/>
<dbReference type="OrthoDB" id="9802800at2"/>
<dbReference type="Proteomes" id="UP000002706">
    <property type="component" value="Chromosome"/>
</dbReference>
<dbReference type="GO" id="GO:0005737">
    <property type="term" value="C:cytoplasm"/>
    <property type="evidence" value="ECO:0007669"/>
    <property type="project" value="UniProtKB-SubCell"/>
</dbReference>
<dbReference type="GO" id="GO:0009368">
    <property type="term" value="C:endopeptidase Clp complex"/>
    <property type="evidence" value="ECO:0007669"/>
    <property type="project" value="TreeGrafter"/>
</dbReference>
<dbReference type="GO" id="GO:0004176">
    <property type="term" value="F:ATP-dependent peptidase activity"/>
    <property type="evidence" value="ECO:0007669"/>
    <property type="project" value="InterPro"/>
</dbReference>
<dbReference type="GO" id="GO:0051117">
    <property type="term" value="F:ATPase binding"/>
    <property type="evidence" value="ECO:0007669"/>
    <property type="project" value="TreeGrafter"/>
</dbReference>
<dbReference type="GO" id="GO:0004252">
    <property type="term" value="F:serine-type endopeptidase activity"/>
    <property type="evidence" value="ECO:0007669"/>
    <property type="project" value="UniProtKB-UniRule"/>
</dbReference>
<dbReference type="GO" id="GO:0006515">
    <property type="term" value="P:protein quality control for misfolded or incompletely synthesized proteins"/>
    <property type="evidence" value="ECO:0007669"/>
    <property type="project" value="TreeGrafter"/>
</dbReference>
<dbReference type="CDD" id="cd07017">
    <property type="entry name" value="S14_ClpP_2"/>
    <property type="match status" value="1"/>
</dbReference>
<dbReference type="FunFam" id="3.90.226.10:FF:000001">
    <property type="entry name" value="ATP-dependent Clp protease proteolytic subunit"/>
    <property type="match status" value="1"/>
</dbReference>
<dbReference type="Gene3D" id="3.90.226.10">
    <property type="entry name" value="2-enoyl-CoA Hydratase, Chain A, domain 1"/>
    <property type="match status" value="1"/>
</dbReference>
<dbReference type="HAMAP" id="MF_00444">
    <property type="entry name" value="ClpP"/>
    <property type="match status" value="1"/>
</dbReference>
<dbReference type="InterPro" id="IPR001907">
    <property type="entry name" value="ClpP"/>
</dbReference>
<dbReference type="InterPro" id="IPR029045">
    <property type="entry name" value="ClpP/crotonase-like_dom_sf"/>
</dbReference>
<dbReference type="InterPro" id="IPR023562">
    <property type="entry name" value="ClpP/TepA"/>
</dbReference>
<dbReference type="InterPro" id="IPR033135">
    <property type="entry name" value="ClpP_His_AS"/>
</dbReference>
<dbReference type="InterPro" id="IPR018215">
    <property type="entry name" value="ClpP_Ser_AS"/>
</dbReference>
<dbReference type="NCBIfam" id="TIGR00493">
    <property type="entry name" value="clpP"/>
    <property type="match status" value="1"/>
</dbReference>
<dbReference type="NCBIfam" id="NF001368">
    <property type="entry name" value="PRK00277.1"/>
    <property type="match status" value="1"/>
</dbReference>
<dbReference type="NCBIfam" id="NF009205">
    <property type="entry name" value="PRK12553.1"/>
    <property type="match status" value="1"/>
</dbReference>
<dbReference type="PANTHER" id="PTHR10381">
    <property type="entry name" value="ATP-DEPENDENT CLP PROTEASE PROTEOLYTIC SUBUNIT"/>
    <property type="match status" value="1"/>
</dbReference>
<dbReference type="PANTHER" id="PTHR10381:SF70">
    <property type="entry name" value="ATP-DEPENDENT CLP PROTEASE PROTEOLYTIC SUBUNIT"/>
    <property type="match status" value="1"/>
</dbReference>
<dbReference type="Pfam" id="PF00574">
    <property type="entry name" value="CLP_protease"/>
    <property type="match status" value="1"/>
</dbReference>
<dbReference type="PRINTS" id="PR00127">
    <property type="entry name" value="CLPPROTEASEP"/>
</dbReference>
<dbReference type="SUPFAM" id="SSF52096">
    <property type="entry name" value="ClpP/crotonase"/>
    <property type="match status" value="1"/>
</dbReference>
<dbReference type="PROSITE" id="PS00382">
    <property type="entry name" value="CLP_PROTEASE_HIS"/>
    <property type="match status" value="1"/>
</dbReference>
<dbReference type="PROSITE" id="PS00381">
    <property type="entry name" value="CLP_PROTEASE_SER"/>
    <property type="match status" value="1"/>
</dbReference>
<evidence type="ECO:0000255" key="1">
    <source>
        <dbReference type="HAMAP-Rule" id="MF_00444"/>
    </source>
</evidence>